<evidence type="ECO:0000255" key="1">
    <source>
        <dbReference type="HAMAP-Rule" id="MF_00819"/>
    </source>
</evidence>
<evidence type="ECO:0000256" key="2">
    <source>
        <dbReference type="SAM" id="MobiDB-lite"/>
    </source>
</evidence>
<comment type="function">
    <text evidence="1">Could be involved in septation.</text>
</comment>
<comment type="similarity">
    <text evidence="1">Belongs to the SpoVG family.</text>
</comment>
<keyword id="KW-0131">Cell cycle</keyword>
<keyword id="KW-0132">Cell division</keyword>
<keyword id="KW-1185">Reference proteome</keyword>
<keyword id="KW-0717">Septation</keyword>
<organism>
    <name type="scientific">Staphylococcus carnosus (strain TM300)</name>
    <dbReference type="NCBI Taxonomy" id="396513"/>
    <lineage>
        <taxon>Bacteria</taxon>
        <taxon>Bacillati</taxon>
        <taxon>Bacillota</taxon>
        <taxon>Bacilli</taxon>
        <taxon>Bacillales</taxon>
        <taxon>Staphylococcaceae</taxon>
        <taxon>Staphylococcus</taxon>
    </lineage>
</organism>
<accession>B9DLD5</accession>
<sequence>MKVTDVRLRKIQTDGRMKALVSITLDDAFVVHDLRVIEGNSGLFVAMPSKRTPDGEFRDIAHPINSDMRQEIQDAVMKVYDETDEVIPDKNAQPSSDSEDNGSEEEA</sequence>
<gene>
    <name evidence="1" type="primary">spoVG</name>
    <name type="ordered locus">Sca_0148</name>
</gene>
<dbReference type="EMBL" id="AM295250">
    <property type="protein sequence ID" value="CAL27061.1"/>
    <property type="molecule type" value="Genomic_DNA"/>
</dbReference>
<dbReference type="RefSeq" id="WP_012664176.1">
    <property type="nucleotide sequence ID" value="NC_012121.1"/>
</dbReference>
<dbReference type="SMR" id="B9DLD5"/>
<dbReference type="GeneID" id="93795062"/>
<dbReference type="KEGG" id="sca:SCA_0148"/>
<dbReference type="eggNOG" id="COG2088">
    <property type="taxonomic scope" value="Bacteria"/>
</dbReference>
<dbReference type="HOGENOM" id="CLU_103669_2_1_9"/>
<dbReference type="OrthoDB" id="9796286at2"/>
<dbReference type="BioCyc" id="SCAR396513:SCA_RS00715-MONOMER"/>
<dbReference type="Proteomes" id="UP000000444">
    <property type="component" value="Chromosome"/>
</dbReference>
<dbReference type="GO" id="GO:0000917">
    <property type="term" value="P:division septum assembly"/>
    <property type="evidence" value="ECO:0007669"/>
    <property type="project" value="UniProtKB-KW"/>
</dbReference>
<dbReference type="GO" id="GO:0030435">
    <property type="term" value="P:sporulation resulting in formation of a cellular spore"/>
    <property type="evidence" value="ECO:0007669"/>
    <property type="project" value="InterPro"/>
</dbReference>
<dbReference type="Gene3D" id="3.30.1120.40">
    <property type="entry name" value="Stage V sporulation protein G"/>
    <property type="match status" value="1"/>
</dbReference>
<dbReference type="HAMAP" id="MF_00819">
    <property type="entry name" value="SpoVG"/>
    <property type="match status" value="1"/>
</dbReference>
<dbReference type="InterPro" id="IPR007170">
    <property type="entry name" value="SpoVG"/>
</dbReference>
<dbReference type="InterPro" id="IPR036751">
    <property type="entry name" value="SpoVG_sf"/>
</dbReference>
<dbReference type="NCBIfam" id="NF009749">
    <property type="entry name" value="PRK13259.1"/>
    <property type="match status" value="1"/>
</dbReference>
<dbReference type="PANTHER" id="PTHR38429">
    <property type="entry name" value="SEPTATION PROTEIN SPOVG-RELATED"/>
    <property type="match status" value="1"/>
</dbReference>
<dbReference type="PANTHER" id="PTHR38429:SF1">
    <property type="entry name" value="SEPTATION PROTEIN SPOVG-RELATED"/>
    <property type="match status" value="1"/>
</dbReference>
<dbReference type="Pfam" id="PF04026">
    <property type="entry name" value="SpoVG"/>
    <property type="match status" value="1"/>
</dbReference>
<dbReference type="SUPFAM" id="SSF160537">
    <property type="entry name" value="SpoVG-like"/>
    <property type="match status" value="1"/>
</dbReference>
<feature type="chain" id="PRO_1000148687" description="Putative septation protein SpoVG">
    <location>
        <begin position="1"/>
        <end position="107"/>
    </location>
</feature>
<feature type="region of interest" description="Disordered" evidence="2">
    <location>
        <begin position="82"/>
        <end position="107"/>
    </location>
</feature>
<feature type="compositionally biased region" description="Acidic residues" evidence="2">
    <location>
        <begin position="97"/>
        <end position="107"/>
    </location>
</feature>
<proteinExistence type="inferred from homology"/>
<name>SP5G_STACT</name>
<protein>
    <recommendedName>
        <fullName evidence="1">Putative septation protein SpoVG</fullName>
    </recommendedName>
</protein>
<reference key="1">
    <citation type="journal article" date="2009" name="Appl. Environ. Microbiol.">
        <title>Genome analysis of the meat starter culture bacterium Staphylococcus carnosus TM300.</title>
        <authorList>
            <person name="Rosenstein R."/>
            <person name="Nerz C."/>
            <person name="Biswas L."/>
            <person name="Resch A."/>
            <person name="Raddatz G."/>
            <person name="Schuster S.C."/>
            <person name="Goetz F."/>
        </authorList>
    </citation>
    <scope>NUCLEOTIDE SEQUENCE [LARGE SCALE GENOMIC DNA]</scope>
    <source>
        <strain>TM300</strain>
    </source>
</reference>